<accession>P0CJ92</accession>
<gene>
    <name type="primary">GOLGA8H</name>
</gene>
<evidence type="ECO:0000255" key="1"/>
<evidence type="ECO:0000256" key="2">
    <source>
        <dbReference type="SAM" id="MobiDB-lite"/>
    </source>
</evidence>
<evidence type="ECO:0000305" key="3"/>
<proteinExistence type="inferred from homology"/>
<feature type="chain" id="PRO_0000405257" description="Golgin subfamily A member 8H">
    <location>
        <begin position="1"/>
        <end position="632"/>
    </location>
</feature>
<feature type="region of interest" description="Disordered" evidence="2">
    <location>
        <begin position="1"/>
        <end position="77"/>
    </location>
</feature>
<feature type="region of interest" description="Disordered" evidence="2">
    <location>
        <begin position="352"/>
        <end position="379"/>
    </location>
</feature>
<feature type="region of interest" description="Disordered" evidence="2">
    <location>
        <begin position="423"/>
        <end position="452"/>
    </location>
</feature>
<feature type="region of interest" description="Disordered" evidence="2">
    <location>
        <begin position="496"/>
        <end position="524"/>
    </location>
</feature>
<feature type="coiled-coil region" evidence="1">
    <location>
        <begin position="110"/>
        <end position="201"/>
    </location>
</feature>
<feature type="coiled-coil region" evidence="1">
    <location>
        <begin position="240"/>
        <end position="468"/>
    </location>
</feature>
<feature type="compositionally biased region" description="Basic and acidic residues" evidence="2">
    <location>
        <begin position="352"/>
        <end position="362"/>
    </location>
</feature>
<feature type="compositionally biased region" description="Basic and acidic residues" evidence="2">
    <location>
        <begin position="427"/>
        <end position="440"/>
    </location>
</feature>
<feature type="compositionally biased region" description="Gly residues" evidence="2">
    <location>
        <begin position="508"/>
        <end position="520"/>
    </location>
</feature>
<organism>
    <name type="scientific">Homo sapiens</name>
    <name type="common">Human</name>
    <dbReference type="NCBI Taxonomy" id="9606"/>
    <lineage>
        <taxon>Eukaryota</taxon>
        <taxon>Metazoa</taxon>
        <taxon>Chordata</taxon>
        <taxon>Craniata</taxon>
        <taxon>Vertebrata</taxon>
        <taxon>Euteleostomi</taxon>
        <taxon>Mammalia</taxon>
        <taxon>Eutheria</taxon>
        <taxon>Euarchontoglires</taxon>
        <taxon>Primates</taxon>
        <taxon>Haplorrhini</taxon>
        <taxon>Catarrhini</taxon>
        <taxon>Hominidae</taxon>
        <taxon>Homo</taxon>
    </lineage>
</organism>
<name>GOG8H_HUMAN</name>
<comment type="similarity">
    <text evidence="3">Belongs to the GOLGA8 family.</text>
</comment>
<keyword id="KW-0175">Coiled coil</keyword>
<keyword id="KW-1185">Reference proteome</keyword>
<dbReference type="EMBL" id="AC026150">
    <property type="status" value="NOT_ANNOTATED_CDS"/>
    <property type="molecule type" value="Genomic_DNA"/>
</dbReference>
<dbReference type="CCDS" id="CCDS61576.1"/>
<dbReference type="RefSeq" id="NP_001269419.1">
    <property type="nucleotide sequence ID" value="NM_001282490.2"/>
</dbReference>
<dbReference type="SMR" id="P0CJ92"/>
<dbReference type="FunCoup" id="P0CJ92">
    <property type="interactions" value="16"/>
</dbReference>
<dbReference type="STRING" id="9606.ENSP00000456894"/>
<dbReference type="GlyGen" id="P0CJ92">
    <property type="glycosylation" value="1 site"/>
</dbReference>
<dbReference type="iPTMnet" id="P0CJ92"/>
<dbReference type="PhosphoSitePlus" id="P0CJ92"/>
<dbReference type="BioMuta" id="GOLGA8H"/>
<dbReference type="DMDM" id="325530054"/>
<dbReference type="jPOST" id="P0CJ92"/>
<dbReference type="MassIVE" id="P0CJ92"/>
<dbReference type="PaxDb" id="9606-ENSP00000456894"/>
<dbReference type="PeptideAtlas" id="P0CJ92"/>
<dbReference type="ProteomicsDB" id="52500"/>
<dbReference type="Antibodypedia" id="69118">
    <property type="antibodies" value="51 antibodies from 9 providers"/>
</dbReference>
<dbReference type="DNASU" id="728498"/>
<dbReference type="Ensembl" id="ENST00000566740.2">
    <property type="protein sequence ID" value="ENSP00000456894.1"/>
    <property type="gene ID" value="ENSG00000261794.2"/>
</dbReference>
<dbReference type="GeneID" id="728498"/>
<dbReference type="KEGG" id="hsa:728498"/>
<dbReference type="MANE-Select" id="ENST00000566740.2">
    <property type="protein sequence ID" value="ENSP00000456894.1"/>
    <property type="RefSeq nucleotide sequence ID" value="NM_001282490.2"/>
    <property type="RefSeq protein sequence ID" value="NP_001269419.1"/>
</dbReference>
<dbReference type="UCSC" id="uc032byf.2">
    <property type="organism name" value="human"/>
</dbReference>
<dbReference type="AGR" id="HGNC:37443"/>
<dbReference type="CTD" id="728498"/>
<dbReference type="GeneCards" id="GOLGA8H"/>
<dbReference type="HGNC" id="HGNC:37443">
    <property type="gene designation" value="GOLGA8H"/>
</dbReference>
<dbReference type="HPA" id="ENSG00000261794">
    <property type="expression patterns" value="Tissue enhanced (testis)"/>
</dbReference>
<dbReference type="neXtProt" id="NX_P0CJ92"/>
<dbReference type="OpenTargets" id="ENSG00000261794"/>
<dbReference type="VEuPathDB" id="HostDB:ENSG00000261794"/>
<dbReference type="eggNOG" id="KOG4725">
    <property type="taxonomic scope" value="Eukaryota"/>
</dbReference>
<dbReference type="GeneTree" id="ENSGT00530000062932"/>
<dbReference type="HOGENOM" id="CLU_012403_1_2_1"/>
<dbReference type="InParanoid" id="P0CJ92"/>
<dbReference type="OMA" id="KKGCEAG"/>
<dbReference type="OrthoDB" id="9837597at2759"/>
<dbReference type="PAN-GO" id="P0CJ92">
    <property type="GO annotations" value="4 GO annotations based on evolutionary models"/>
</dbReference>
<dbReference type="PhylomeDB" id="P0CJ92"/>
<dbReference type="TreeFam" id="TF316990"/>
<dbReference type="PathwayCommons" id="P0CJ92"/>
<dbReference type="SignaLink" id="P0CJ92"/>
<dbReference type="BioGRID-ORCS" id="728498">
    <property type="hits" value="15 hits in 555 CRISPR screens"/>
</dbReference>
<dbReference type="GenomeRNAi" id="728498"/>
<dbReference type="Pharos" id="P0CJ92">
    <property type="development level" value="Tdark"/>
</dbReference>
<dbReference type="PRO" id="PR:P0CJ92"/>
<dbReference type="Proteomes" id="UP000005640">
    <property type="component" value="Chromosome 15"/>
</dbReference>
<dbReference type="RNAct" id="P0CJ92">
    <property type="molecule type" value="protein"/>
</dbReference>
<dbReference type="Bgee" id="ENSG00000261794">
    <property type="expression patterns" value="Expressed in sural nerve and 91 other cell types or tissues"/>
</dbReference>
<dbReference type="GO" id="GO:0005801">
    <property type="term" value="C:cis-Golgi network"/>
    <property type="evidence" value="ECO:0000318"/>
    <property type="project" value="GO_Central"/>
</dbReference>
<dbReference type="GO" id="GO:0000137">
    <property type="term" value="C:Golgi cis cisterna"/>
    <property type="evidence" value="ECO:0000318"/>
    <property type="project" value="GO_Central"/>
</dbReference>
<dbReference type="GO" id="GO:0032580">
    <property type="term" value="C:Golgi cisterna membrane"/>
    <property type="evidence" value="ECO:0000318"/>
    <property type="project" value="GO_Central"/>
</dbReference>
<dbReference type="GO" id="GO:0007030">
    <property type="term" value="P:Golgi organization"/>
    <property type="evidence" value="ECO:0000318"/>
    <property type="project" value="GO_Central"/>
</dbReference>
<dbReference type="InterPro" id="IPR043937">
    <property type="entry name" value="GM130_C"/>
</dbReference>
<dbReference type="InterPro" id="IPR043976">
    <property type="entry name" value="GOLGA_cons_dom"/>
</dbReference>
<dbReference type="InterPro" id="IPR024858">
    <property type="entry name" value="Golgin_A"/>
</dbReference>
<dbReference type="PANTHER" id="PTHR10881:SF62">
    <property type="entry name" value="GOLGIN SUBFAMILY A MEMBER 8H-RELATED"/>
    <property type="match status" value="1"/>
</dbReference>
<dbReference type="PANTHER" id="PTHR10881">
    <property type="entry name" value="GOLGIN SUBFAMILY A MEMBER-RELATED"/>
    <property type="match status" value="1"/>
</dbReference>
<dbReference type="Pfam" id="PF19046">
    <property type="entry name" value="GM130_C"/>
    <property type="match status" value="1"/>
</dbReference>
<dbReference type="Pfam" id="PF15070">
    <property type="entry name" value="GOLGA2L5"/>
    <property type="match status" value="2"/>
</dbReference>
<sequence>MAEETQHNKLAAAKKKLKEYWQKNSPRVPAGANRNRKTNGSVPEKATSGGCQPPGDSATGFHREGPTSSATLKDLESPCQERAVVLDSRSVEISQLKNTIKSLKQQKKQVEHQLEEEKKANNKKQKAKRVLEVQIQTLNIQKGKLNTDLYHMKRSLRYFEEKSKDLAVCLQHSLQRKGELESVLSNVMATQKKKANQLSSRSKARTEWKLEQSMREEALLKVQLTQLKESFQQVQLERDECAEHLKGERARWQQRMRKMSQEICTLKKEKQQDMRRVEKLERSLSKLKNQMAEPLPPEPPAVPSEVELQHLRKELERVAGELQAQVKKNQRISLLNQRQEERIQEQEERLRKQEERIQEQHKSLQQLAKPQSVFEEPNNENKNALQLEQQVKELQEKLGEEHLEAASQQNQQLTAQLSLMALPGEGHGGEHLDSEGEEAPRPMPSVPEDPESREAMSSFMDHLEEKADLSELVKKKELCFIHHWRDRCHQKTHHLLSEPGGRAKDAALGGGHHQAGAQGGDEGEAAGAAADGIAAYSNYNNGHRKFLAAAHNSADEPGPGAPAPQELGAADKHGDLCEVSLTSSAQGEAREDPLLDKPTAQPIVQDHQEHPGLGSNCCVPLLCWAWLPRRRR</sequence>
<reference key="1">
    <citation type="journal article" date="2006" name="Nature">
        <title>Analysis of the DNA sequence and duplication history of human chromosome 15.</title>
        <authorList>
            <person name="Zody M.C."/>
            <person name="Garber M."/>
            <person name="Sharpe T."/>
            <person name="Young S.K."/>
            <person name="Rowen L."/>
            <person name="O'Neill K."/>
            <person name="Whittaker C.A."/>
            <person name="Kamal M."/>
            <person name="Chang J.L."/>
            <person name="Cuomo C.A."/>
            <person name="Dewar K."/>
            <person name="FitzGerald M.G."/>
            <person name="Kodira C.D."/>
            <person name="Madan A."/>
            <person name="Qin S."/>
            <person name="Yang X."/>
            <person name="Abbasi N."/>
            <person name="Abouelleil A."/>
            <person name="Arachchi H.M."/>
            <person name="Baradarani L."/>
            <person name="Birditt B."/>
            <person name="Bloom S."/>
            <person name="Bloom T."/>
            <person name="Borowsky M.L."/>
            <person name="Burke J."/>
            <person name="Butler J."/>
            <person name="Cook A."/>
            <person name="DeArellano K."/>
            <person name="DeCaprio D."/>
            <person name="Dorris L. III"/>
            <person name="Dors M."/>
            <person name="Eichler E.E."/>
            <person name="Engels R."/>
            <person name="Fahey J."/>
            <person name="Fleetwood P."/>
            <person name="Friedman C."/>
            <person name="Gearin G."/>
            <person name="Hall J.L."/>
            <person name="Hensley G."/>
            <person name="Johnson E."/>
            <person name="Jones C."/>
            <person name="Kamat A."/>
            <person name="Kaur A."/>
            <person name="Locke D.P."/>
            <person name="Madan A."/>
            <person name="Munson G."/>
            <person name="Jaffe D.B."/>
            <person name="Lui A."/>
            <person name="Macdonald P."/>
            <person name="Mauceli E."/>
            <person name="Naylor J.W."/>
            <person name="Nesbitt R."/>
            <person name="Nicol R."/>
            <person name="O'Leary S.B."/>
            <person name="Ratcliffe A."/>
            <person name="Rounsley S."/>
            <person name="She X."/>
            <person name="Sneddon K.M.B."/>
            <person name="Stewart S."/>
            <person name="Sougnez C."/>
            <person name="Stone S.M."/>
            <person name="Topham K."/>
            <person name="Vincent D."/>
            <person name="Wang S."/>
            <person name="Zimmer A.R."/>
            <person name="Birren B.W."/>
            <person name="Hood L."/>
            <person name="Lander E.S."/>
            <person name="Nusbaum C."/>
        </authorList>
    </citation>
    <scope>NUCLEOTIDE SEQUENCE [LARGE SCALE GENOMIC DNA]</scope>
</reference>
<protein>
    <recommendedName>
        <fullName>Golgin subfamily A member 8H</fullName>
    </recommendedName>
</protein>